<name>MHPB_SHISS</name>
<accession>Q3Z586</accession>
<proteinExistence type="inferred from homology"/>
<organism>
    <name type="scientific">Shigella sonnei (strain Ss046)</name>
    <dbReference type="NCBI Taxonomy" id="300269"/>
    <lineage>
        <taxon>Bacteria</taxon>
        <taxon>Pseudomonadati</taxon>
        <taxon>Pseudomonadota</taxon>
        <taxon>Gammaproteobacteria</taxon>
        <taxon>Enterobacterales</taxon>
        <taxon>Enterobacteriaceae</taxon>
        <taxon>Shigella</taxon>
    </lineage>
</organism>
<dbReference type="EC" id="1.13.11.16" evidence="1"/>
<dbReference type="EMBL" id="CP000038">
    <property type="protein sequence ID" value="AAZ87076.1"/>
    <property type="molecule type" value="Genomic_DNA"/>
</dbReference>
<dbReference type="RefSeq" id="WP_000543457.1">
    <property type="nucleotide sequence ID" value="NC_007384.1"/>
</dbReference>
<dbReference type="SMR" id="Q3Z586"/>
<dbReference type="GeneID" id="93777107"/>
<dbReference type="KEGG" id="ssn:SSON_0295"/>
<dbReference type="HOGENOM" id="CLU_078149_0_0_6"/>
<dbReference type="UniPathway" id="UPA00714"/>
<dbReference type="Proteomes" id="UP000002529">
    <property type="component" value="Chromosome"/>
</dbReference>
<dbReference type="GO" id="GO:0047070">
    <property type="term" value="F:3-carboxyethylcatechol 2,3-dioxygenase activity"/>
    <property type="evidence" value="ECO:0007669"/>
    <property type="project" value="UniProtKB-UniRule"/>
</dbReference>
<dbReference type="GO" id="GO:0008198">
    <property type="term" value="F:ferrous iron binding"/>
    <property type="evidence" value="ECO:0007669"/>
    <property type="project" value="InterPro"/>
</dbReference>
<dbReference type="GO" id="GO:0019380">
    <property type="term" value="P:3-phenylpropionate catabolic process"/>
    <property type="evidence" value="ECO:0007669"/>
    <property type="project" value="UniProtKB-UniRule"/>
</dbReference>
<dbReference type="CDD" id="cd07365">
    <property type="entry name" value="MhpB_like"/>
    <property type="match status" value="1"/>
</dbReference>
<dbReference type="Gene3D" id="3.40.830.10">
    <property type="entry name" value="LigB-like"/>
    <property type="match status" value="1"/>
</dbReference>
<dbReference type="HAMAP" id="MF_01653">
    <property type="entry name" value="MhpB"/>
    <property type="match status" value="1"/>
</dbReference>
<dbReference type="InterPro" id="IPR023789">
    <property type="entry name" value="DHPP/DHXA_dioxygenase"/>
</dbReference>
<dbReference type="InterPro" id="IPR004183">
    <property type="entry name" value="Xdiol_dOase_suB"/>
</dbReference>
<dbReference type="NCBIfam" id="NF009907">
    <property type="entry name" value="PRK13370.1-1"/>
    <property type="match status" value="1"/>
</dbReference>
<dbReference type="NCBIfam" id="NF009910">
    <property type="entry name" value="PRK13370.1-4"/>
    <property type="match status" value="1"/>
</dbReference>
<dbReference type="Pfam" id="PF02900">
    <property type="entry name" value="LigB"/>
    <property type="match status" value="1"/>
</dbReference>
<dbReference type="SUPFAM" id="SSF53213">
    <property type="entry name" value="LigB-like"/>
    <property type="match status" value="1"/>
</dbReference>
<reference key="1">
    <citation type="journal article" date="2005" name="Nucleic Acids Res.">
        <title>Genome dynamics and diversity of Shigella species, the etiologic agents of bacillary dysentery.</title>
        <authorList>
            <person name="Yang F."/>
            <person name="Yang J."/>
            <person name="Zhang X."/>
            <person name="Chen L."/>
            <person name="Jiang Y."/>
            <person name="Yan Y."/>
            <person name="Tang X."/>
            <person name="Wang J."/>
            <person name="Xiong Z."/>
            <person name="Dong J."/>
            <person name="Xue Y."/>
            <person name="Zhu Y."/>
            <person name="Xu X."/>
            <person name="Sun L."/>
            <person name="Chen S."/>
            <person name="Nie H."/>
            <person name="Peng J."/>
            <person name="Xu J."/>
            <person name="Wang Y."/>
            <person name="Yuan Z."/>
            <person name="Wen Y."/>
            <person name="Yao Z."/>
            <person name="Shen Y."/>
            <person name="Qiang B."/>
            <person name="Hou Y."/>
            <person name="Yu J."/>
            <person name="Jin Q."/>
        </authorList>
    </citation>
    <scope>NUCLEOTIDE SEQUENCE [LARGE SCALE GENOMIC DNA]</scope>
    <source>
        <strain>Ss046</strain>
    </source>
</reference>
<protein>
    <recommendedName>
        <fullName evidence="1">2,3-dihydroxyphenylpropionate/2,3-dihydroxicinnamic acid 1,2-dioxygenase</fullName>
        <ecNumber evidence="1">1.13.11.16</ecNumber>
    </recommendedName>
    <alternativeName>
        <fullName evidence="1">3-carboxyethylcatechol 2,3-dioxygenase</fullName>
    </alternativeName>
</protein>
<evidence type="ECO:0000255" key="1">
    <source>
        <dbReference type="HAMAP-Rule" id="MF_01653"/>
    </source>
</evidence>
<feature type="chain" id="PRO_0000337669" description="2,3-dihydroxyphenylpropionate/2,3-dihydroxicinnamic acid 1,2-dioxygenase">
    <location>
        <begin position="1"/>
        <end position="314"/>
    </location>
</feature>
<feature type="active site" description="Proton donor" evidence="1">
    <location>
        <position position="115"/>
    </location>
</feature>
<feature type="active site" description="Proton acceptor" evidence="1">
    <location>
        <position position="179"/>
    </location>
</feature>
<comment type="function">
    <text evidence="1">Catalyzes the non-heme iron(II)-dependent oxidative cleavage of 2,3-dihydroxyphenylpropionic acid and 2,3-dihydroxicinnamic acid into 2-hydroxy-6-ketononadienedioate and 2-hydroxy-6-ketononatrienedioate, respectively.</text>
</comment>
<comment type="catalytic activity">
    <reaction evidence="1">
        <text>3-(2,3-dihydroxyphenyl)propanoate + O2 = (2Z,4E)-2-hydroxy-6-oxonona-2,4-dienedioate + H(+)</text>
        <dbReference type="Rhea" id="RHEA:23840"/>
        <dbReference type="ChEBI" id="CHEBI:15378"/>
        <dbReference type="ChEBI" id="CHEBI:15379"/>
        <dbReference type="ChEBI" id="CHEBI:46951"/>
        <dbReference type="ChEBI" id="CHEBI:66887"/>
        <dbReference type="EC" id="1.13.11.16"/>
    </reaction>
</comment>
<comment type="catalytic activity">
    <reaction evidence="1">
        <text>(2E)-3-(2,3-dihydroxyphenyl)prop-2-enoate + O2 = (2Z,4E,7E)-2-hydroxy-6-oxonona-2,4,7-trienedioate + H(+)</text>
        <dbReference type="Rhea" id="RHEA:25054"/>
        <dbReference type="ChEBI" id="CHEBI:15378"/>
        <dbReference type="ChEBI" id="CHEBI:15379"/>
        <dbReference type="ChEBI" id="CHEBI:58642"/>
        <dbReference type="ChEBI" id="CHEBI:66888"/>
        <dbReference type="EC" id="1.13.11.16"/>
    </reaction>
</comment>
<comment type="cofactor">
    <cofactor evidence="1">
        <name>Fe(2+)</name>
        <dbReference type="ChEBI" id="CHEBI:29033"/>
    </cofactor>
</comment>
<comment type="pathway">
    <text evidence="1">Aromatic compound metabolism; 3-phenylpropanoate degradation.</text>
</comment>
<comment type="subunit">
    <text evidence="1">Homotetramer.</text>
</comment>
<comment type="similarity">
    <text evidence="1">Belongs to the LigB/MhpB extradiol dioxygenase family.</text>
</comment>
<sequence>MHAYLHCLSHSPLVGYVDPAQEVLDEVNGVIASARERIAAFSPELVVLFAPDHYNGFFYDVMPPFCLGVGATAIGDFGSAAGELPVPVELAEACAHAVMKSGIDLAVSYCMQVDHGFAQPLEFLLGGLDKVPVLPVFINGVATPLPGFQRTRMLGEAIGRFTSTLNKRVLFLGSGGLSHQPPVPELAKADAHMRDRLLGSGKDLPASERELRQQRVISAAEKFVEDQRTLHPLNPIWDNQFMTLLEQGRIQELDAVSNEELSAIAGKSTHEIKTWVAAFAAISAFGNWRSEGRYYRPIPEWIAGFGSLSARTEN</sequence>
<gene>
    <name evidence="1" type="primary">mhpB</name>
    <name type="ordered locus">SSON_0295</name>
</gene>
<keyword id="KW-0058">Aromatic hydrocarbons catabolism</keyword>
<keyword id="KW-0223">Dioxygenase</keyword>
<keyword id="KW-0408">Iron</keyword>
<keyword id="KW-0560">Oxidoreductase</keyword>
<keyword id="KW-1185">Reference proteome</keyword>